<accession>A4G1T4</accession>
<comment type="function">
    <text evidence="1">Catalyzes the NADPH-dependent reduction of N-acetyl-5-glutamyl phosphate to yield N-acetyl-L-glutamate 5-semialdehyde.</text>
</comment>
<comment type="catalytic activity">
    <reaction evidence="1">
        <text>N-acetyl-L-glutamate 5-semialdehyde + phosphate + NADP(+) = N-acetyl-L-glutamyl 5-phosphate + NADPH + H(+)</text>
        <dbReference type="Rhea" id="RHEA:21588"/>
        <dbReference type="ChEBI" id="CHEBI:15378"/>
        <dbReference type="ChEBI" id="CHEBI:29123"/>
        <dbReference type="ChEBI" id="CHEBI:43474"/>
        <dbReference type="ChEBI" id="CHEBI:57783"/>
        <dbReference type="ChEBI" id="CHEBI:57936"/>
        <dbReference type="ChEBI" id="CHEBI:58349"/>
        <dbReference type="EC" id="1.2.1.38"/>
    </reaction>
</comment>
<comment type="pathway">
    <text evidence="1">Amino-acid biosynthesis; L-arginine biosynthesis; N(2)-acetyl-L-ornithine from L-glutamate: step 3/4.</text>
</comment>
<comment type="subcellular location">
    <subcellularLocation>
        <location evidence="1">Cytoplasm</location>
    </subcellularLocation>
</comment>
<comment type="similarity">
    <text evidence="1">Belongs to the NAGSA dehydrogenase family. Type 1 subfamily.</text>
</comment>
<name>ARGC_HERAR</name>
<proteinExistence type="inferred from homology"/>
<keyword id="KW-0028">Amino-acid biosynthesis</keyword>
<keyword id="KW-0055">Arginine biosynthesis</keyword>
<keyword id="KW-0963">Cytoplasm</keyword>
<keyword id="KW-0521">NADP</keyword>
<keyword id="KW-0560">Oxidoreductase</keyword>
<keyword id="KW-1185">Reference proteome</keyword>
<organism>
    <name type="scientific">Herminiimonas arsenicoxydans</name>
    <dbReference type="NCBI Taxonomy" id="204773"/>
    <lineage>
        <taxon>Bacteria</taxon>
        <taxon>Pseudomonadati</taxon>
        <taxon>Pseudomonadota</taxon>
        <taxon>Betaproteobacteria</taxon>
        <taxon>Burkholderiales</taxon>
        <taxon>Oxalobacteraceae</taxon>
        <taxon>Herminiimonas</taxon>
    </lineage>
</organism>
<feature type="chain" id="PRO_1000011000" description="N-acetyl-gamma-glutamyl-phosphate reductase">
    <location>
        <begin position="1"/>
        <end position="345"/>
    </location>
</feature>
<feature type="active site" evidence="1">
    <location>
        <position position="149"/>
    </location>
</feature>
<gene>
    <name evidence="1" type="primary">argC</name>
    <name type="ordered locus">HEAR0242</name>
</gene>
<dbReference type="EC" id="1.2.1.38" evidence="1"/>
<dbReference type="EMBL" id="CU207211">
    <property type="protein sequence ID" value="CAL60471.1"/>
    <property type="molecule type" value="Genomic_DNA"/>
</dbReference>
<dbReference type="SMR" id="A4G1T4"/>
<dbReference type="STRING" id="204773.HEAR0242"/>
<dbReference type="KEGG" id="har:HEAR0242"/>
<dbReference type="eggNOG" id="COG0002">
    <property type="taxonomic scope" value="Bacteria"/>
</dbReference>
<dbReference type="HOGENOM" id="CLU_006384_0_1_4"/>
<dbReference type="OrthoDB" id="9801289at2"/>
<dbReference type="UniPathway" id="UPA00068">
    <property type="reaction ID" value="UER00108"/>
</dbReference>
<dbReference type="Proteomes" id="UP000006697">
    <property type="component" value="Chromosome"/>
</dbReference>
<dbReference type="GO" id="GO:0005737">
    <property type="term" value="C:cytoplasm"/>
    <property type="evidence" value="ECO:0007669"/>
    <property type="project" value="UniProtKB-SubCell"/>
</dbReference>
<dbReference type="GO" id="GO:0003942">
    <property type="term" value="F:N-acetyl-gamma-glutamyl-phosphate reductase activity"/>
    <property type="evidence" value="ECO:0007669"/>
    <property type="project" value="UniProtKB-UniRule"/>
</dbReference>
<dbReference type="GO" id="GO:0051287">
    <property type="term" value="F:NAD binding"/>
    <property type="evidence" value="ECO:0007669"/>
    <property type="project" value="InterPro"/>
</dbReference>
<dbReference type="GO" id="GO:0070401">
    <property type="term" value="F:NADP+ binding"/>
    <property type="evidence" value="ECO:0007669"/>
    <property type="project" value="InterPro"/>
</dbReference>
<dbReference type="GO" id="GO:0006526">
    <property type="term" value="P:L-arginine biosynthetic process"/>
    <property type="evidence" value="ECO:0007669"/>
    <property type="project" value="UniProtKB-UniRule"/>
</dbReference>
<dbReference type="CDD" id="cd23934">
    <property type="entry name" value="AGPR_1_C"/>
    <property type="match status" value="1"/>
</dbReference>
<dbReference type="CDD" id="cd17895">
    <property type="entry name" value="AGPR_1_N"/>
    <property type="match status" value="1"/>
</dbReference>
<dbReference type="FunFam" id="3.30.360.10:FF:000014">
    <property type="entry name" value="N-acetyl-gamma-glutamyl-phosphate reductase"/>
    <property type="match status" value="1"/>
</dbReference>
<dbReference type="Gene3D" id="3.30.360.10">
    <property type="entry name" value="Dihydrodipicolinate Reductase, domain 2"/>
    <property type="match status" value="1"/>
</dbReference>
<dbReference type="Gene3D" id="3.40.50.720">
    <property type="entry name" value="NAD(P)-binding Rossmann-like Domain"/>
    <property type="match status" value="1"/>
</dbReference>
<dbReference type="HAMAP" id="MF_00150">
    <property type="entry name" value="ArgC_type1"/>
    <property type="match status" value="1"/>
</dbReference>
<dbReference type="InterPro" id="IPR023013">
    <property type="entry name" value="AGPR_AS"/>
</dbReference>
<dbReference type="InterPro" id="IPR000706">
    <property type="entry name" value="AGPR_type-1"/>
</dbReference>
<dbReference type="InterPro" id="IPR036291">
    <property type="entry name" value="NAD(P)-bd_dom_sf"/>
</dbReference>
<dbReference type="InterPro" id="IPR050085">
    <property type="entry name" value="NAGSA_dehydrogenase"/>
</dbReference>
<dbReference type="InterPro" id="IPR000534">
    <property type="entry name" value="Semialdehyde_DH_NAD-bd"/>
</dbReference>
<dbReference type="NCBIfam" id="TIGR01850">
    <property type="entry name" value="argC"/>
    <property type="match status" value="1"/>
</dbReference>
<dbReference type="PANTHER" id="PTHR32338:SF10">
    <property type="entry name" value="N-ACETYL-GAMMA-GLUTAMYL-PHOSPHATE REDUCTASE, CHLOROPLASTIC-RELATED"/>
    <property type="match status" value="1"/>
</dbReference>
<dbReference type="PANTHER" id="PTHR32338">
    <property type="entry name" value="N-ACETYL-GAMMA-GLUTAMYL-PHOSPHATE REDUCTASE, CHLOROPLASTIC-RELATED-RELATED"/>
    <property type="match status" value="1"/>
</dbReference>
<dbReference type="Pfam" id="PF01118">
    <property type="entry name" value="Semialdhyde_dh"/>
    <property type="match status" value="1"/>
</dbReference>
<dbReference type="Pfam" id="PF22698">
    <property type="entry name" value="Semialdhyde_dhC_1"/>
    <property type="match status" value="1"/>
</dbReference>
<dbReference type="SMART" id="SM00859">
    <property type="entry name" value="Semialdhyde_dh"/>
    <property type="match status" value="1"/>
</dbReference>
<dbReference type="SUPFAM" id="SSF55347">
    <property type="entry name" value="Glyceraldehyde-3-phosphate dehydrogenase-like, C-terminal domain"/>
    <property type="match status" value="1"/>
</dbReference>
<dbReference type="SUPFAM" id="SSF51735">
    <property type="entry name" value="NAD(P)-binding Rossmann-fold domains"/>
    <property type="match status" value="1"/>
</dbReference>
<dbReference type="PROSITE" id="PS01224">
    <property type="entry name" value="ARGC"/>
    <property type="match status" value="1"/>
</dbReference>
<reference key="1">
    <citation type="journal article" date="2007" name="PLoS Genet.">
        <title>A tale of two oxidation states: bacterial colonization of arsenic-rich environments.</title>
        <authorList>
            <person name="Muller D."/>
            <person name="Medigue C."/>
            <person name="Koechler S."/>
            <person name="Barbe V."/>
            <person name="Barakat M."/>
            <person name="Talla E."/>
            <person name="Bonnefoy V."/>
            <person name="Krin E."/>
            <person name="Arsene-Ploetze F."/>
            <person name="Carapito C."/>
            <person name="Chandler M."/>
            <person name="Cournoyer B."/>
            <person name="Cruveiller S."/>
            <person name="Dossat C."/>
            <person name="Duval S."/>
            <person name="Heymann M."/>
            <person name="Leize E."/>
            <person name="Lieutaud A."/>
            <person name="Lievremont D."/>
            <person name="Makita Y."/>
            <person name="Mangenot S."/>
            <person name="Nitschke W."/>
            <person name="Ortet P."/>
            <person name="Perdrial N."/>
            <person name="Schoepp B."/>
            <person name="Siguier P."/>
            <person name="Simeonova D.D."/>
            <person name="Rouy Z."/>
            <person name="Segurens B."/>
            <person name="Turlin E."/>
            <person name="Vallenet D."/>
            <person name="van Dorsselaer A."/>
            <person name="Weiss S."/>
            <person name="Weissenbach J."/>
            <person name="Lett M.-C."/>
            <person name="Danchin A."/>
            <person name="Bertin P.N."/>
        </authorList>
    </citation>
    <scope>NUCLEOTIDE SEQUENCE [LARGE SCALE GENOMIC DNA]</scope>
    <source>
        <strain>ULPAs1</strain>
    </source>
</reference>
<protein>
    <recommendedName>
        <fullName evidence="1">N-acetyl-gamma-glutamyl-phosphate reductase</fullName>
        <shortName evidence="1">AGPR</shortName>
        <ecNumber evidence="1">1.2.1.38</ecNumber>
    </recommendedName>
    <alternativeName>
        <fullName evidence="1">N-acetyl-glutamate semialdehyde dehydrogenase</fullName>
        <shortName evidence="1">NAGSA dehydrogenase</shortName>
    </alternativeName>
</protein>
<evidence type="ECO:0000255" key="1">
    <source>
        <dbReference type="HAMAP-Rule" id="MF_00150"/>
    </source>
</evidence>
<sequence>MIKVGIVGGTGYTGVELLRILATHPEVELTAITSRKEDGLPVSDMFPSLRGRVDLAFSSPDKAKLTECDVVFFATPHGVAMAQAPELLAAGVKVIDLAADFRLQDTAAFEKWYKMPHSCPELLKEAAYGLVELNRDAIRKARIVGNPGCYPTTMQLGLAPLLKADVIDASHLIADCKSGVSGAGRKAEVSMLFAEAGDNFKAYGVSGHRHSPETVERLQILTGQKVGLLFAPHLVPMIRGMHSTMYARLTKEMDNAALQALFENAYASEPFVDVMPFGSHPETRSTRASNMLRIALHRPNDGDTIVILVVQDNLVKGASGQAVQCMNLMFGLPETTGLLHVPVLP</sequence>